<protein>
    <recommendedName>
        <fullName>Cytochrome b</fullName>
    </recommendedName>
    <alternativeName>
        <fullName>Complex III subunit 3</fullName>
    </alternativeName>
    <alternativeName>
        <fullName>Complex III subunit III</fullName>
    </alternativeName>
    <alternativeName>
        <fullName>Cytochrome b-c1 complex subunit 3</fullName>
    </alternativeName>
    <alternativeName>
        <fullName>Ubiquinol-cytochrome-c reductase complex cytochrome b subunit</fullName>
    </alternativeName>
</protein>
<organism>
    <name type="scientific">Chaetodipus fallax</name>
    <name type="common">San Diego pocket mouse</name>
    <name type="synonym">Perognathus fallax</name>
    <dbReference type="NCBI Taxonomy" id="145410"/>
    <lineage>
        <taxon>Eukaryota</taxon>
        <taxon>Metazoa</taxon>
        <taxon>Chordata</taxon>
        <taxon>Craniata</taxon>
        <taxon>Vertebrata</taxon>
        <taxon>Euteleostomi</taxon>
        <taxon>Mammalia</taxon>
        <taxon>Eutheria</taxon>
        <taxon>Euarchontoglires</taxon>
        <taxon>Glires</taxon>
        <taxon>Rodentia</taxon>
        <taxon>Castorimorpha</taxon>
        <taxon>Heteromyidae</taxon>
        <taxon>Perognathinae</taxon>
        <taxon>Chaetodipus</taxon>
    </lineage>
</organism>
<comment type="function">
    <text evidence="2">Component of the ubiquinol-cytochrome c reductase complex (complex III or cytochrome b-c1 complex) that is part of the mitochondrial respiratory chain. The b-c1 complex mediates electron transfer from ubiquinol to cytochrome c. Contributes to the generation of a proton gradient across the mitochondrial membrane that is then used for ATP synthesis.</text>
</comment>
<comment type="cofactor">
    <cofactor evidence="2">
        <name>heme b</name>
        <dbReference type="ChEBI" id="CHEBI:60344"/>
    </cofactor>
    <text evidence="2">Binds 2 heme b groups non-covalently.</text>
</comment>
<comment type="subunit">
    <text evidence="2">The cytochrome bc1 complex contains 11 subunits: 3 respiratory subunits (MT-CYB, CYC1 and UQCRFS1), 2 core proteins (UQCRC1 and UQCRC2) and 6 low-molecular weight proteins (UQCRH/QCR6, UQCRB/QCR7, UQCRQ/QCR8, UQCR10/QCR9, UQCR11/QCR10 and a cleavage product of UQCRFS1). This cytochrome bc1 complex then forms a dimer.</text>
</comment>
<comment type="subcellular location">
    <subcellularLocation>
        <location evidence="2">Mitochondrion inner membrane</location>
        <topology evidence="2">Multi-pass membrane protein</topology>
    </subcellularLocation>
</comment>
<comment type="miscellaneous">
    <text evidence="1">Heme 1 (or BL or b562) is low-potential and absorbs at about 562 nm, and heme 2 (or BH or b566) is high-potential and absorbs at about 566 nm.</text>
</comment>
<comment type="similarity">
    <text evidence="3 4">Belongs to the cytochrome b family.</text>
</comment>
<comment type="caution">
    <text evidence="2">The full-length protein contains only eight transmembrane helices, not nine as predicted by bioinformatics tools.</text>
</comment>
<name>CYB_CHAFL</name>
<sequence>MTILRKSHPLMKMVNHAFIDLPAPSNISGWWNFGSLLGMCLIIQIASGLFLAMHYTSDTISAFSSVAHICRDVNYGWLIRYIHANGASLFFICLYLHIGRGIYYGSYMYKETWNIGIVLLFLTMATAFMGYVLPWGQMSFWGATVITNLLSAIPYVGSSLVEWIWGGFSVDKATLTRFFAFHFILPFIIAATAMVHLLFLHETGSNNPLGIPSNTDKIPFHPYYTFKDFLGVIIILALFLTFVLFFPDLLGDPDNYSPANPLNTPPHIKPEWYFLFAYAILRSIPNKLGGVIALVLSILVLALFPLLHTANQRSMMFRPISQFLFWTLVSDLLVLTWIGGQPVEPPFIIIGQVASILYFSIILVLLPVAGLIENKILKW</sequence>
<accession>Q508K1</accession>
<evidence type="ECO:0000250" key="1"/>
<evidence type="ECO:0000250" key="2">
    <source>
        <dbReference type="UniProtKB" id="P00157"/>
    </source>
</evidence>
<evidence type="ECO:0000255" key="3">
    <source>
        <dbReference type="PROSITE-ProRule" id="PRU00967"/>
    </source>
</evidence>
<evidence type="ECO:0000255" key="4">
    <source>
        <dbReference type="PROSITE-ProRule" id="PRU00968"/>
    </source>
</evidence>
<keyword id="KW-0249">Electron transport</keyword>
<keyword id="KW-0349">Heme</keyword>
<keyword id="KW-0408">Iron</keyword>
<keyword id="KW-0472">Membrane</keyword>
<keyword id="KW-0479">Metal-binding</keyword>
<keyword id="KW-0496">Mitochondrion</keyword>
<keyword id="KW-0999">Mitochondrion inner membrane</keyword>
<keyword id="KW-0679">Respiratory chain</keyword>
<keyword id="KW-0812">Transmembrane</keyword>
<keyword id="KW-1133">Transmembrane helix</keyword>
<keyword id="KW-0813">Transport</keyword>
<keyword id="KW-0830">Ubiquinone</keyword>
<proteinExistence type="inferred from homology"/>
<dbReference type="EMBL" id="AY926402">
    <property type="protein sequence ID" value="AAY23245.1"/>
    <property type="molecule type" value="Genomic_DNA"/>
</dbReference>
<dbReference type="SMR" id="Q508K1"/>
<dbReference type="GO" id="GO:0005743">
    <property type="term" value="C:mitochondrial inner membrane"/>
    <property type="evidence" value="ECO:0007669"/>
    <property type="project" value="UniProtKB-SubCell"/>
</dbReference>
<dbReference type="GO" id="GO:0045275">
    <property type="term" value="C:respiratory chain complex III"/>
    <property type="evidence" value="ECO:0007669"/>
    <property type="project" value="InterPro"/>
</dbReference>
<dbReference type="GO" id="GO:0046872">
    <property type="term" value="F:metal ion binding"/>
    <property type="evidence" value="ECO:0007669"/>
    <property type="project" value="UniProtKB-KW"/>
</dbReference>
<dbReference type="GO" id="GO:0008121">
    <property type="term" value="F:ubiquinol-cytochrome-c reductase activity"/>
    <property type="evidence" value="ECO:0007669"/>
    <property type="project" value="InterPro"/>
</dbReference>
<dbReference type="GO" id="GO:0006122">
    <property type="term" value="P:mitochondrial electron transport, ubiquinol to cytochrome c"/>
    <property type="evidence" value="ECO:0007669"/>
    <property type="project" value="TreeGrafter"/>
</dbReference>
<dbReference type="CDD" id="cd00290">
    <property type="entry name" value="cytochrome_b_C"/>
    <property type="match status" value="1"/>
</dbReference>
<dbReference type="CDD" id="cd00284">
    <property type="entry name" value="Cytochrome_b_N"/>
    <property type="match status" value="1"/>
</dbReference>
<dbReference type="FunFam" id="1.20.810.10:FF:000002">
    <property type="entry name" value="Cytochrome b"/>
    <property type="match status" value="1"/>
</dbReference>
<dbReference type="Gene3D" id="1.20.810.10">
    <property type="entry name" value="Cytochrome Bc1 Complex, Chain C"/>
    <property type="match status" value="1"/>
</dbReference>
<dbReference type="InterPro" id="IPR005798">
    <property type="entry name" value="Cyt_b/b6_C"/>
</dbReference>
<dbReference type="InterPro" id="IPR036150">
    <property type="entry name" value="Cyt_b/b6_C_sf"/>
</dbReference>
<dbReference type="InterPro" id="IPR005797">
    <property type="entry name" value="Cyt_b/b6_N"/>
</dbReference>
<dbReference type="InterPro" id="IPR027387">
    <property type="entry name" value="Cytb/b6-like_sf"/>
</dbReference>
<dbReference type="InterPro" id="IPR030689">
    <property type="entry name" value="Cytochrome_b"/>
</dbReference>
<dbReference type="InterPro" id="IPR048260">
    <property type="entry name" value="Cytochrome_b_C_euk/bac"/>
</dbReference>
<dbReference type="InterPro" id="IPR048259">
    <property type="entry name" value="Cytochrome_b_N_euk/bac"/>
</dbReference>
<dbReference type="InterPro" id="IPR016174">
    <property type="entry name" value="Di-haem_cyt_TM"/>
</dbReference>
<dbReference type="PANTHER" id="PTHR19271">
    <property type="entry name" value="CYTOCHROME B"/>
    <property type="match status" value="1"/>
</dbReference>
<dbReference type="PANTHER" id="PTHR19271:SF16">
    <property type="entry name" value="CYTOCHROME B"/>
    <property type="match status" value="1"/>
</dbReference>
<dbReference type="Pfam" id="PF00032">
    <property type="entry name" value="Cytochrom_B_C"/>
    <property type="match status" value="1"/>
</dbReference>
<dbReference type="Pfam" id="PF00033">
    <property type="entry name" value="Cytochrome_B"/>
    <property type="match status" value="1"/>
</dbReference>
<dbReference type="PIRSF" id="PIRSF038885">
    <property type="entry name" value="COB"/>
    <property type="match status" value="1"/>
</dbReference>
<dbReference type="SUPFAM" id="SSF81648">
    <property type="entry name" value="a domain/subunit of cytochrome bc1 complex (Ubiquinol-cytochrome c reductase)"/>
    <property type="match status" value="1"/>
</dbReference>
<dbReference type="SUPFAM" id="SSF81342">
    <property type="entry name" value="Transmembrane di-heme cytochromes"/>
    <property type="match status" value="1"/>
</dbReference>
<dbReference type="PROSITE" id="PS51003">
    <property type="entry name" value="CYTB_CTER"/>
    <property type="match status" value="1"/>
</dbReference>
<dbReference type="PROSITE" id="PS51002">
    <property type="entry name" value="CYTB_NTER"/>
    <property type="match status" value="1"/>
</dbReference>
<reference key="1">
    <citation type="journal article" date="2005" name="J. Mammal.">
        <title>Phylogenetics of the new world rodent family Heteromyidae.</title>
        <authorList>
            <person name="Alexander L.F."/>
            <person name="Riddle B.R."/>
        </authorList>
    </citation>
    <scope>NUCLEOTIDE SEQUENCE [GENOMIC DNA]</scope>
    <source>
        <strain>Isolate LVT 3741</strain>
    </source>
</reference>
<feature type="chain" id="PRO_0000257881" description="Cytochrome b">
    <location>
        <begin position="1"/>
        <end position="379"/>
    </location>
</feature>
<feature type="transmembrane region" description="Helical" evidence="2">
    <location>
        <begin position="33"/>
        <end position="53"/>
    </location>
</feature>
<feature type="transmembrane region" description="Helical" evidence="2">
    <location>
        <begin position="77"/>
        <end position="98"/>
    </location>
</feature>
<feature type="transmembrane region" description="Helical" evidence="2">
    <location>
        <begin position="113"/>
        <end position="133"/>
    </location>
</feature>
<feature type="transmembrane region" description="Helical" evidence="2">
    <location>
        <begin position="178"/>
        <end position="198"/>
    </location>
</feature>
<feature type="transmembrane region" description="Helical" evidence="2">
    <location>
        <begin position="226"/>
        <end position="246"/>
    </location>
</feature>
<feature type="transmembrane region" description="Helical" evidence="2">
    <location>
        <begin position="288"/>
        <end position="308"/>
    </location>
</feature>
<feature type="transmembrane region" description="Helical" evidence="2">
    <location>
        <begin position="320"/>
        <end position="340"/>
    </location>
</feature>
<feature type="transmembrane region" description="Helical" evidence="2">
    <location>
        <begin position="347"/>
        <end position="367"/>
    </location>
</feature>
<feature type="binding site" description="axial binding residue" evidence="2">
    <location>
        <position position="83"/>
    </location>
    <ligand>
        <name>heme b</name>
        <dbReference type="ChEBI" id="CHEBI:60344"/>
        <label>b562</label>
    </ligand>
    <ligandPart>
        <name>Fe</name>
        <dbReference type="ChEBI" id="CHEBI:18248"/>
    </ligandPart>
</feature>
<feature type="binding site" description="axial binding residue" evidence="2">
    <location>
        <position position="97"/>
    </location>
    <ligand>
        <name>heme b</name>
        <dbReference type="ChEBI" id="CHEBI:60344"/>
        <label>b566</label>
    </ligand>
    <ligandPart>
        <name>Fe</name>
        <dbReference type="ChEBI" id="CHEBI:18248"/>
    </ligandPart>
</feature>
<feature type="binding site" description="axial binding residue" evidence="2">
    <location>
        <position position="182"/>
    </location>
    <ligand>
        <name>heme b</name>
        <dbReference type="ChEBI" id="CHEBI:60344"/>
        <label>b562</label>
    </ligand>
    <ligandPart>
        <name>Fe</name>
        <dbReference type="ChEBI" id="CHEBI:18248"/>
    </ligandPart>
</feature>
<feature type="binding site" description="axial binding residue" evidence="2">
    <location>
        <position position="196"/>
    </location>
    <ligand>
        <name>heme b</name>
        <dbReference type="ChEBI" id="CHEBI:60344"/>
        <label>b566</label>
    </ligand>
    <ligandPart>
        <name>Fe</name>
        <dbReference type="ChEBI" id="CHEBI:18248"/>
    </ligandPart>
</feature>
<feature type="binding site" evidence="2">
    <location>
        <position position="201"/>
    </location>
    <ligand>
        <name>a ubiquinone</name>
        <dbReference type="ChEBI" id="CHEBI:16389"/>
    </ligand>
</feature>
<gene>
    <name type="primary">MT-CYB</name>
    <name type="synonym">COB</name>
    <name type="synonym">CYTB</name>
    <name type="synonym">MTCYB</name>
</gene>
<geneLocation type="mitochondrion"/>